<comment type="function">
    <text evidence="1">Produces ATP from ADP in the presence of a proton gradient across the membrane. The gamma chain is believed to be important in regulating ATPase activity and the flow of protons through the CF(0) complex.</text>
</comment>
<comment type="subunit">
    <text evidence="1">F-type ATPases have 2 components, CF(1) - the catalytic core - and CF(0) - the membrane proton channel. CF(1) has five subunits: alpha(3), beta(3), gamma(1), delta(1), epsilon(1). CF(0) has three main subunits: a, b and c.</text>
</comment>
<comment type="subcellular location">
    <subcellularLocation>
        <location evidence="1">Cell membrane</location>
        <topology evidence="1">Peripheral membrane protein</topology>
    </subcellularLocation>
</comment>
<comment type="similarity">
    <text evidence="1">Belongs to the ATPase gamma chain family.</text>
</comment>
<feature type="chain" id="PRO_1000148615" description="ATP synthase gamma chain">
    <location>
        <begin position="1"/>
        <end position="281"/>
    </location>
</feature>
<protein>
    <recommendedName>
        <fullName evidence="1">ATP synthase gamma chain</fullName>
    </recommendedName>
    <alternativeName>
        <fullName evidence="1">ATP synthase F1 sector gamma subunit</fullName>
    </alternativeName>
    <alternativeName>
        <fullName evidence="1">F-ATPase gamma subunit</fullName>
    </alternativeName>
</protein>
<name>ATPG_DESHD</name>
<proteinExistence type="inferred from homology"/>
<accession>B8FZ35</accession>
<gene>
    <name evidence="1" type="primary">atpG</name>
    <name type="ordered locus">Dhaf_4792</name>
</gene>
<dbReference type="EMBL" id="CP001336">
    <property type="protein sequence ID" value="ACL22787.1"/>
    <property type="molecule type" value="Genomic_DNA"/>
</dbReference>
<dbReference type="RefSeq" id="WP_015945468.1">
    <property type="nucleotide sequence ID" value="NC_011830.1"/>
</dbReference>
<dbReference type="SMR" id="B8FZ35"/>
<dbReference type="KEGG" id="dhd:Dhaf_4792"/>
<dbReference type="HOGENOM" id="CLU_050669_0_1_9"/>
<dbReference type="Proteomes" id="UP000007726">
    <property type="component" value="Chromosome"/>
</dbReference>
<dbReference type="GO" id="GO:0005886">
    <property type="term" value="C:plasma membrane"/>
    <property type="evidence" value="ECO:0007669"/>
    <property type="project" value="UniProtKB-SubCell"/>
</dbReference>
<dbReference type="GO" id="GO:0045259">
    <property type="term" value="C:proton-transporting ATP synthase complex"/>
    <property type="evidence" value="ECO:0007669"/>
    <property type="project" value="UniProtKB-KW"/>
</dbReference>
<dbReference type="GO" id="GO:0005524">
    <property type="term" value="F:ATP binding"/>
    <property type="evidence" value="ECO:0007669"/>
    <property type="project" value="UniProtKB-UniRule"/>
</dbReference>
<dbReference type="GO" id="GO:0046933">
    <property type="term" value="F:proton-transporting ATP synthase activity, rotational mechanism"/>
    <property type="evidence" value="ECO:0007669"/>
    <property type="project" value="UniProtKB-UniRule"/>
</dbReference>
<dbReference type="GO" id="GO:0042777">
    <property type="term" value="P:proton motive force-driven plasma membrane ATP synthesis"/>
    <property type="evidence" value="ECO:0007669"/>
    <property type="project" value="UniProtKB-UniRule"/>
</dbReference>
<dbReference type="CDD" id="cd12151">
    <property type="entry name" value="F1-ATPase_gamma"/>
    <property type="match status" value="1"/>
</dbReference>
<dbReference type="FunFam" id="3.40.1380.10:FF:000006">
    <property type="entry name" value="ATP synthase gamma chain"/>
    <property type="match status" value="1"/>
</dbReference>
<dbReference type="Gene3D" id="3.40.1380.10">
    <property type="match status" value="1"/>
</dbReference>
<dbReference type="Gene3D" id="1.10.287.80">
    <property type="entry name" value="ATP synthase, gamma subunit, helix hairpin domain"/>
    <property type="match status" value="1"/>
</dbReference>
<dbReference type="HAMAP" id="MF_00815">
    <property type="entry name" value="ATP_synth_gamma_bact"/>
    <property type="match status" value="1"/>
</dbReference>
<dbReference type="InterPro" id="IPR035968">
    <property type="entry name" value="ATP_synth_F1_ATPase_gsu"/>
</dbReference>
<dbReference type="InterPro" id="IPR000131">
    <property type="entry name" value="ATP_synth_F1_gsu"/>
</dbReference>
<dbReference type="InterPro" id="IPR023632">
    <property type="entry name" value="ATP_synth_F1_gsu_CS"/>
</dbReference>
<dbReference type="NCBIfam" id="TIGR01146">
    <property type="entry name" value="ATPsyn_F1gamma"/>
    <property type="match status" value="1"/>
</dbReference>
<dbReference type="PANTHER" id="PTHR11693">
    <property type="entry name" value="ATP SYNTHASE GAMMA CHAIN"/>
    <property type="match status" value="1"/>
</dbReference>
<dbReference type="PANTHER" id="PTHR11693:SF22">
    <property type="entry name" value="ATP SYNTHASE SUBUNIT GAMMA, MITOCHONDRIAL"/>
    <property type="match status" value="1"/>
</dbReference>
<dbReference type="Pfam" id="PF00231">
    <property type="entry name" value="ATP-synt"/>
    <property type="match status" value="1"/>
</dbReference>
<dbReference type="PRINTS" id="PR00126">
    <property type="entry name" value="ATPASEGAMMA"/>
</dbReference>
<dbReference type="SUPFAM" id="SSF52943">
    <property type="entry name" value="ATP synthase (F1-ATPase), gamma subunit"/>
    <property type="match status" value="1"/>
</dbReference>
<dbReference type="PROSITE" id="PS00153">
    <property type="entry name" value="ATPASE_GAMMA"/>
    <property type="match status" value="1"/>
</dbReference>
<reference key="1">
    <citation type="journal article" date="2012" name="BMC Microbiol.">
        <title>Genome sequence of Desulfitobacterium hafniense DCB-2, a Gram-positive anaerobe capable of dehalogenation and metal reduction.</title>
        <authorList>
            <person name="Kim S.H."/>
            <person name="Harzman C."/>
            <person name="Davis J.K."/>
            <person name="Hutcheson R."/>
            <person name="Broderick J.B."/>
            <person name="Marsh T.L."/>
            <person name="Tiedje J.M."/>
        </authorList>
    </citation>
    <scope>NUCLEOTIDE SEQUENCE [LARGE SCALE GENOMIC DNA]</scope>
    <source>
        <strain>DSM 10664 / DCB-2</strain>
    </source>
</reference>
<sequence>MASARDIRRRIRGVRNMQQITKAMKMVAASKLRKAQEKVIAARPYARQLQEVLARLAQDQADVTHPLLMERPVQRVGYIIITSDRGLCGGYNTNLIRMTNSSIAEETHDVRLVAVGRKGRDFYRRGKIETIAEFVGLGDNPSYGQAKEIAQEVIGLYESGELDEVYLLYNEFVSAISQRPTRIKLLPIEKPKQVSNTEYIFEPSAEEILTTLLPKYVETQVFRTLLEGKASEMGAKMTAMGAATDNAKEAIERLTLQLNRARQAAITTEISEIVGGASALE</sequence>
<evidence type="ECO:0000255" key="1">
    <source>
        <dbReference type="HAMAP-Rule" id="MF_00815"/>
    </source>
</evidence>
<organism>
    <name type="scientific">Desulfitobacterium hafniense (strain DSM 10664 / DCB-2)</name>
    <dbReference type="NCBI Taxonomy" id="272564"/>
    <lineage>
        <taxon>Bacteria</taxon>
        <taxon>Bacillati</taxon>
        <taxon>Bacillota</taxon>
        <taxon>Clostridia</taxon>
        <taxon>Eubacteriales</taxon>
        <taxon>Desulfitobacteriaceae</taxon>
        <taxon>Desulfitobacterium</taxon>
    </lineage>
</organism>
<keyword id="KW-0066">ATP synthesis</keyword>
<keyword id="KW-1003">Cell membrane</keyword>
<keyword id="KW-0139">CF(1)</keyword>
<keyword id="KW-0375">Hydrogen ion transport</keyword>
<keyword id="KW-0406">Ion transport</keyword>
<keyword id="KW-0472">Membrane</keyword>
<keyword id="KW-0813">Transport</keyword>